<dbReference type="EC" id="2.1.2.1" evidence="1"/>
<dbReference type="EMBL" id="CP000699">
    <property type="protein sequence ID" value="ABQ67497.1"/>
    <property type="molecule type" value="Genomic_DNA"/>
</dbReference>
<dbReference type="SMR" id="A5V5D1"/>
<dbReference type="STRING" id="392499.Swit_1131"/>
<dbReference type="PaxDb" id="392499-Swit_1131"/>
<dbReference type="KEGG" id="swi:Swit_1131"/>
<dbReference type="eggNOG" id="COG0112">
    <property type="taxonomic scope" value="Bacteria"/>
</dbReference>
<dbReference type="HOGENOM" id="CLU_022477_2_1_5"/>
<dbReference type="OrthoDB" id="9803846at2"/>
<dbReference type="UniPathway" id="UPA00193"/>
<dbReference type="UniPathway" id="UPA00288">
    <property type="reaction ID" value="UER01023"/>
</dbReference>
<dbReference type="Proteomes" id="UP000001989">
    <property type="component" value="Chromosome"/>
</dbReference>
<dbReference type="GO" id="GO:0005829">
    <property type="term" value="C:cytosol"/>
    <property type="evidence" value="ECO:0007669"/>
    <property type="project" value="TreeGrafter"/>
</dbReference>
<dbReference type="GO" id="GO:0004372">
    <property type="term" value="F:glycine hydroxymethyltransferase activity"/>
    <property type="evidence" value="ECO:0007669"/>
    <property type="project" value="UniProtKB-UniRule"/>
</dbReference>
<dbReference type="GO" id="GO:0030170">
    <property type="term" value="F:pyridoxal phosphate binding"/>
    <property type="evidence" value="ECO:0007669"/>
    <property type="project" value="UniProtKB-UniRule"/>
</dbReference>
<dbReference type="GO" id="GO:0019264">
    <property type="term" value="P:glycine biosynthetic process from serine"/>
    <property type="evidence" value="ECO:0007669"/>
    <property type="project" value="UniProtKB-UniRule"/>
</dbReference>
<dbReference type="GO" id="GO:0035999">
    <property type="term" value="P:tetrahydrofolate interconversion"/>
    <property type="evidence" value="ECO:0007669"/>
    <property type="project" value="UniProtKB-UniRule"/>
</dbReference>
<dbReference type="CDD" id="cd00378">
    <property type="entry name" value="SHMT"/>
    <property type="match status" value="1"/>
</dbReference>
<dbReference type="FunFam" id="3.40.640.10:FF:000001">
    <property type="entry name" value="Serine hydroxymethyltransferase"/>
    <property type="match status" value="1"/>
</dbReference>
<dbReference type="Gene3D" id="3.90.1150.10">
    <property type="entry name" value="Aspartate Aminotransferase, domain 1"/>
    <property type="match status" value="1"/>
</dbReference>
<dbReference type="Gene3D" id="3.40.640.10">
    <property type="entry name" value="Type I PLP-dependent aspartate aminotransferase-like (Major domain)"/>
    <property type="match status" value="1"/>
</dbReference>
<dbReference type="HAMAP" id="MF_00051">
    <property type="entry name" value="SHMT"/>
    <property type="match status" value="1"/>
</dbReference>
<dbReference type="InterPro" id="IPR015424">
    <property type="entry name" value="PyrdxlP-dep_Trfase"/>
</dbReference>
<dbReference type="InterPro" id="IPR015421">
    <property type="entry name" value="PyrdxlP-dep_Trfase_major"/>
</dbReference>
<dbReference type="InterPro" id="IPR015422">
    <property type="entry name" value="PyrdxlP-dep_Trfase_small"/>
</dbReference>
<dbReference type="InterPro" id="IPR001085">
    <property type="entry name" value="Ser_HO-MeTrfase"/>
</dbReference>
<dbReference type="InterPro" id="IPR049943">
    <property type="entry name" value="Ser_HO-MeTrfase-like"/>
</dbReference>
<dbReference type="InterPro" id="IPR019798">
    <property type="entry name" value="Ser_HO-MeTrfase_PLP_BS"/>
</dbReference>
<dbReference type="InterPro" id="IPR039429">
    <property type="entry name" value="SHMT-like_dom"/>
</dbReference>
<dbReference type="NCBIfam" id="NF000586">
    <property type="entry name" value="PRK00011.1"/>
    <property type="match status" value="1"/>
</dbReference>
<dbReference type="PANTHER" id="PTHR11680">
    <property type="entry name" value="SERINE HYDROXYMETHYLTRANSFERASE"/>
    <property type="match status" value="1"/>
</dbReference>
<dbReference type="PANTHER" id="PTHR11680:SF35">
    <property type="entry name" value="SERINE HYDROXYMETHYLTRANSFERASE 1"/>
    <property type="match status" value="1"/>
</dbReference>
<dbReference type="Pfam" id="PF00464">
    <property type="entry name" value="SHMT"/>
    <property type="match status" value="1"/>
</dbReference>
<dbReference type="PIRSF" id="PIRSF000412">
    <property type="entry name" value="SHMT"/>
    <property type="match status" value="1"/>
</dbReference>
<dbReference type="SUPFAM" id="SSF53383">
    <property type="entry name" value="PLP-dependent transferases"/>
    <property type="match status" value="1"/>
</dbReference>
<dbReference type="PROSITE" id="PS00096">
    <property type="entry name" value="SHMT"/>
    <property type="match status" value="1"/>
</dbReference>
<organism>
    <name type="scientific">Rhizorhabdus wittichii (strain DSM 6014 / CCUG 31198 / JCM 15750 / NBRC 105917 / EY 4224 / RW1)</name>
    <name type="common">Sphingomonas wittichii</name>
    <dbReference type="NCBI Taxonomy" id="392499"/>
    <lineage>
        <taxon>Bacteria</taxon>
        <taxon>Pseudomonadati</taxon>
        <taxon>Pseudomonadota</taxon>
        <taxon>Alphaproteobacteria</taxon>
        <taxon>Sphingomonadales</taxon>
        <taxon>Sphingomonadaceae</taxon>
        <taxon>Rhizorhabdus</taxon>
    </lineage>
</organism>
<reference key="1">
    <citation type="journal article" date="2010" name="J. Bacteriol.">
        <title>Genome sequence of the dioxin-mineralizing bacterium Sphingomonas wittichii RW1.</title>
        <authorList>
            <person name="Miller T.R."/>
            <person name="Delcher A.L."/>
            <person name="Salzberg S.L."/>
            <person name="Saunders E."/>
            <person name="Detter J.C."/>
            <person name="Halden R.U."/>
        </authorList>
    </citation>
    <scope>NUCLEOTIDE SEQUENCE [LARGE SCALE GENOMIC DNA]</scope>
    <source>
        <strain>DSM 6014 / CCUG 31198 / JCM 15750 / NBRC 105917 / EY 4224 / RW1</strain>
    </source>
</reference>
<gene>
    <name evidence="1" type="primary">glyA</name>
    <name type="ordered locus">Swit_1131</name>
</gene>
<sequence length="438" mass="46339">MSSNPAATLSDVQPDGFFTRGLADADPAVFGGLTEEIAREKKQIELIASENIVSKAVLEAQGSVFTNKYAEGYPGKRYYQGCHPSDVVEQLAIDRAKQLFNCGFANVQPHSGAQANGAVMLALTQPGDTIMGLSLDAGGHLTHGAKAALSGKWYKAVQYGVRPDDHRIDFDQVEALAREHKPKLIITGGSAYPRHIDFARFRAIADEVGALFMVDMAHFAGLVAGGVHPTPFGHAHVVTTTTHKTLRGPRGGMIMTDDEAIAKKINSAVFPGLQGGPLMHVVAAKAVAFGEALRPEFKAYAAAVVENAKVLAARLKERGADLVSGGTDTHLALVDLRPIGVTGRDADEALERAGITCNKNGVPNDPLPPVKTSGIRVGSPAGTTRGFGPAEFREIADMIADVLDGLAKNGPEGNGQTEAHVKARVEALCDRFPIYPEL</sequence>
<name>GLYA_RHIWR</name>
<comment type="function">
    <text evidence="1">Catalyzes the reversible interconversion of serine and glycine with tetrahydrofolate (THF) serving as the one-carbon carrier. This reaction serves as the major source of one-carbon groups required for the biosynthesis of purines, thymidylate, methionine, and other important biomolecules. Also exhibits THF-independent aldolase activity toward beta-hydroxyamino acids, producing glycine and aldehydes, via a retro-aldol mechanism.</text>
</comment>
<comment type="catalytic activity">
    <reaction evidence="1">
        <text>(6R)-5,10-methylene-5,6,7,8-tetrahydrofolate + glycine + H2O = (6S)-5,6,7,8-tetrahydrofolate + L-serine</text>
        <dbReference type="Rhea" id="RHEA:15481"/>
        <dbReference type="ChEBI" id="CHEBI:15377"/>
        <dbReference type="ChEBI" id="CHEBI:15636"/>
        <dbReference type="ChEBI" id="CHEBI:33384"/>
        <dbReference type="ChEBI" id="CHEBI:57305"/>
        <dbReference type="ChEBI" id="CHEBI:57453"/>
        <dbReference type="EC" id="2.1.2.1"/>
    </reaction>
</comment>
<comment type="cofactor">
    <cofactor evidence="1">
        <name>pyridoxal 5'-phosphate</name>
        <dbReference type="ChEBI" id="CHEBI:597326"/>
    </cofactor>
</comment>
<comment type="pathway">
    <text evidence="1">One-carbon metabolism; tetrahydrofolate interconversion.</text>
</comment>
<comment type="pathway">
    <text evidence="1">Amino-acid biosynthesis; glycine biosynthesis; glycine from L-serine: step 1/1.</text>
</comment>
<comment type="subunit">
    <text evidence="1">Homodimer.</text>
</comment>
<comment type="subcellular location">
    <subcellularLocation>
        <location evidence="1">Cytoplasm</location>
    </subcellularLocation>
</comment>
<comment type="similarity">
    <text evidence="1">Belongs to the SHMT family.</text>
</comment>
<keyword id="KW-0028">Amino-acid biosynthesis</keyword>
<keyword id="KW-0963">Cytoplasm</keyword>
<keyword id="KW-0554">One-carbon metabolism</keyword>
<keyword id="KW-0663">Pyridoxal phosphate</keyword>
<keyword id="KW-1185">Reference proteome</keyword>
<keyword id="KW-0808">Transferase</keyword>
<accession>A5V5D1</accession>
<protein>
    <recommendedName>
        <fullName evidence="1">Serine hydroxymethyltransferase</fullName>
        <shortName evidence="1">SHMT</shortName>
        <shortName evidence="1">Serine methylase</shortName>
        <ecNumber evidence="1">2.1.2.1</ecNumber>
    </recommendedName>
</protein>
<evidence type="ECO:0000255" key="1">
    <source>
        <dbReference type="HAMAP-Rule" id="MF_00051"/>
    </source>
</evidence>
<evidence type="ECO:0000256" key="2">
    <source>
        <dbReference type="SAM" id="MobiDB-lite"/>
    </source>
</evidence>
<feature type="chain" id="PRO_0000369958" description="Serine hydroxymethyltransferase">
    <location>
        <begin position="1"/>
        <end position="438"/>
    </location>
</feature>
<feature type="region of interest" description="Disordered" evidence="2">
    <location>
        <begin position="361"/>
        <end position="383"/>
    </location>
</feature>
<feature type="binding site" evidence="1">
    <location>
        <position position="135"/>
    </location>
    <ligand>
        <name>(6S)-5,6,7,8-tetrahydrofolate</name>
        <dbReference type="ChEBI" id="CHEBI:57453"/>
    </ligand>
</feature>
<feature type="binding site" evidence="1">
    <location>
        <begin position="139"/>
        <end position="141"/>
    </location>
    <ligand>
        <name>(6S)-5,6,7,8-tetrahydrofolate</name>
        <dbReference type="ChEBI" id="CHEBI:57453"/>
    </ligand>
</feature>
<feature type="site" description="Plays an important role in substrate specificity" evidence="1">
    <location>
        <position position="243"/>
    </location>
</feature>
<feature type="modified residue" description="N6-(pyridoxal phosphate)lysine" evidence="1">
    <location>
        <position position="244"/>
    </location>
</feature>
<proteinExistence type="inferred from homology"/>